<gene>
    <name evidence="1" type="primary">rbcL</name>
</gene>
<reference key="1">
    <citation type="journal article" date="2006" name="Mol. Biol. Evol.">
        <title>The chloroplast genome of Phalaenopsis aphrodite (Orchidaceae): comparative analysis of evolutionary rate with that of grasses and its phylogenetic implications.</title>
        <authorList>
            <person name="Chang C.-C."/>
            <person name="Lin H.-C."/>
            <person name="Lin I.-P."/>
            <person name="Chow T.-Y."/>
            <person name="Chen H.-H."/>
            <person name="Chen W.-H."/>
            <person name="Cheng C.-H."/>
            <person name="Lin C.-Y."/>
            <person name="Liu S.-M."/>
            <person name="Chang C.-C."/>
            <person name="Chaw S.-M."/>
        </authorList>
    </citation>
    <scope>NUCLEOTIDE SEQUENCE [LARGE SCALE GENOMIC DNA]</scope>
    <source>
        <strain>cv. Taisugar TS-97</strain>
    </source>
</reference>
<name>RBL_PHAAO</name>
<feature type="propeptide" id="PRO_0000251429" evidence="1">
    <location>
        <begin position="1"/>
        <end position="2"/>
    </location>
</feature>
<feature type="chain" id="PRO_0000251430" description="Ribulose bisphosphate carboxylase large chain">
    <location>
        <begin position="3"/>
        <end position="480"/>
    </location>
</feature>
<feature type="active site" description="Proton acceptor" evidence="1">
    <location>
        <position position="175"/>
    </location>
</feature>
<feature type="active site" description="Proton acceptor" evidence="1">
    <location>
        <position position="294"/>
    </location>
</feature>
<feature type="binding site" description="in homodimeric partner" evidence="1">
    <location>
        <position position="123"/>
    </location>
    <ligand>
        <name>substrate</name>
    </ligand>
</feature>
<feature type="binding site" evidence="1">
    <location>
        <position position="173"/>
    </location>
    <ligand>
        <name>substrate</name>
    </ligand>
</feature>
<feature type="binding site" evidence="1">
    <location>
        <position position="177"/>
    </location>
    <ligand>
        <name>substrate</name>
    </ligand>
</feature>
<feature type="binding site" description="via carbamate group" evidence="1">
    <location>
        <position position="201"/>
    </location>
    <ligand>
        <name>Mg(2+)</name>
        <dbReference type="ChEBI" id="CHEBI:18420"/>
    </ligand>
</feature>
<feature type="binding site" evidence="1">
    <location>
        <position position="203"/>
    </location>
    <ligand>
        <name>Mg(2+)</name>
        <dbReference type="ChEBI" id="CHEBI:18420"/>
    </ligand>
</feature>
<feature type="binding site" evidence="1">
    <location>
        <position position="204"/>
    </location>
    <ligand>
        <name>Mg(2+)</name>
        <dbReference type="ChEBI" id="CHEBI:18420"/>
    </ligand>
</feature>
<feature type="binding site" evidence="1">
    <location>
        <position position="295"/>
    </location>
    <ligand>
        <name>substrate</name>
    </ligand>
</feature>
<feature type="binding site" evidence="1">
    <location>
        <position position="327"/>
    </location>
    <ligand>
        <name>substrate</name>
    </ligand>
</feature>
<feature type="binding site" evidence="1">
    <location>
        <position position="379"/>
    </location>
    <ligand>
        <name>substrate</name>
    </ligand>
</feature>
<feature type="site" description="Transition state stabilizer" evidence="1">
    <location>
        <position position="334"/>
    </location>
</feature>
<feature type="modified residue" description="N-acetylproline" evidence="1">
    <location>
        <position position="3"/>
    </location>
</feature>
<feature type="modified residue" description="N6,N6,N6-trimethyllysine" evidence="1">
    <location>
        <position position="14"/>
    </location>
</feature>
<feature type="modified residue" description="N6-carboxylysine" evidence="1">
    <location>
        <position position="201"/>
    </location>
</feature>
<feature type="disulfide bond" description="Interchain; in linked form" evidence="1">
    <location>
        <position position="247"/>
    </location>
</feature>
<comment type="function">
    <text evidence="1">RuBisCO catalyzes two reactions: the carboxylation of D-ribulose 1,5-bisphosphate, the primary event in carbon dioxide fixation, as well as the oxidative fragmentation of the pentose substrate in the photorespiration process. Both reactions occur simultaneously and in competition at the same active site.</text>
</comment>
<comment type="catalytic activity">
    <reaction evidence="1">
        <text>2 (2R)-3-phosphoglycerate + 2 H(+) = D-ribulose 1,5-bisphosphate + CO2 + H2O</text>
        <dbReference type="Rhea" id="RHEA:23124"/>
        <dbReference type="ChEBI" id="CHEBI:15377"/>
        <dbReference type="ChEBI" id="CHEBI:15378"/>
        <dbReference type="ChEBI" id="CHEBI:16526"/>
        <dbReference type="ChEBI" id="CHEBI:57870"/>
        <dbReference type="ChEBI" id="CHEBI:58272"/>
        <dbReference type="EC" id="4.1.1.39"/>
    </reaction>
</comment>
<comment type="catalytic activity">
    <reaction evidence="1">
        <text>D-ribulose 1,5-bisphosphate + O2 = 2-phosphoglycolate + (2R)-3-phosphoglycerate + 2 H(+)</text>
        <dbReference type="Rhea" id="RHEA:36631"/>
        <dbReference type="ChEBI" id="CHEBI:15378"/>
        <dbReference type="ChEBI" id="CHEBI:15379"/>
        <dbReference type="ChEBI" id="CHEBI:57870"/>
        <dbReference type="ChEBI" id="CHEBI:58033"/>
        <dbReference type="ChEBI" id="CHEBI:58272"/>
    </reaction>
</comment>
<comment type="cofactor">
    <cofactor evidence="1">
        <name>Mg(2+)</name>
        <dbReference type="ChEBI" id="CHEBI:18420"/>
    </cofactor>
    <text evidence="1">Binds 1 Mg(2+) ion per subunit.</text>
</comment>
<comment type="subunit">
    <text evidence="1">Heterohexadecamer of 8 large chains and 8 small chains; disulfide-linked. The disulfide link is formed within the large subunit homodimers.</text>
</comment>
<comment type="subcellular location">
    <subcellularLocation>
        <location>Plastid</location>
        <location>Chloroplast</location>
    </subcellularLocation>
</comment>
<comment type="PTM">
    <text evidence="1">The disulfide bond which can form in the large chain dimeric partners within the hexadecamer appears to be associated with oxidative stress and protein turnover.</text>
</comment>
<comment type="miscellaneous">
    <text evidence="1">The basic functional RuBisCO is composed of a large chain homodimer in a 'head-to-tail' conformation. In form I RuBisCO this homodimer is arranged in a barrel-like tetramer with the small subunits forming a tetrameric 'cap' on each end of the 'barrel'.</text>
</comment>
<comment type="similarity">
    <text evidence="1">Belongs to the RuBisCO large chain family. Type I subfamily.</text>
</comment>
<organism>
    <name type="scientific">Phalaenopsis aphrodite subsp. formosana</name>
    <name type="common">Moth orchid</name>
    <dbReference type="NCBI Taxonomy" id="308872"/>
    <lineage>
        <taxon>Eukaryota</taxon>
        <taxon>Viridiplantae</taxon>
        <taxon>Streptophyta</taxon>
        <taxon>Embryophyta</taxon>
        <taxon>Tracheophyta</taxon>
        <taxon>Spermatophyta</taxon>
        <taxon>Magnoliopsida</taxon>
        <taxon>Liliopsida</taxon>
        <taxon>Asparagales</taxon>
        <taxon>Orchidaceae</taxon>
        <taxon>Epidendroideae</taxon>
        <taxon>Vandeae</taxon>
        <taxon>Aeridinae</taxon>
        <taxon>Phalaenopsis</taxon>
    </lineage>
</organism>
<dbReference type="EC" id="4.1.1.39" evidence="1"/>
<dbReference type="EMBL" id="AY916449">
    <property type="protein sequence ID" value="AAW82508.1"/>
    <property type="molecule type" value="Genomic_DNA"/>
</dbReference>
<dbReference type="RefSeq" id="YP_358584.1">
    <property type="nucleotide sequence ID" value="NC_007499.1"/>
</dbReference>
<dbReference type="SMR" id="Q3BAN4"/>
<dbReference type="GeneID" id="3741687"/>
<dbReference type="GO" id="GO:0009507">
    <property type="term" value="C:chloroplast"/>
    <property type="evidence" value="ECO:0007669"/>
    <property type="project" value="UniProtKB-SubCell"/>
</dbReference>
<dbReference type="GO" id="GO:0000287">
    <property type="term" value="F:magnesium ion binding"/>
    <property type="evidence" value="ECO:0007669"/>
    <property type="project" value="UniProtKB-UniRule"/>
</dbReference>
<dbReference type="GO" id="GO:0004497">
    <property type="term" value="F:monooxygenase activity"/>
    <property type="evidence" value="ECO:0007669"/>
    <property type="project" value="UniProtKB-KW"/>
</dbReference>
<dbReference type="GO" id="GO:0016984">
    <property type="term" value="F:ribulose-bisphosphate carboxylase activity"/>
    <property type="evidence" value="ECO:0007669"/>
    <property type="project" value="UniProtKB-UniRule"/>
</dbReference>
<dbReference type="GO" id="GO:0009853">
    <property type="term" value="P:photorespiration"/>
    <property type="evidence" value="ECO:0007669"/>
    <property type="project" value="UniProtKB-KW"/>
</dbReference>
<dbReference type="GO" id="GO:0019253">
    <property type="term" value="P:reductive pentose-phosphate cycle"/>
    <property type="evidence" value="ECO:0007669"/>
    <property type="project" value="UniProtKB-UniRule"/>
</dbReference>
<dbReference type="CDD" id="cd08212">
    <property type="entry name" value="RuBisCO_large_I"/>
    <property type="match status" value="1"/>
</dbReference>
<dbReference type="FunFam" id="3.20.20.110:FF:000001">
    <property type="entry name" value="Ribulose bisphosphate carboxylase large chain"/>
    <property type="match status" value="1"/>
</dbReference>
<dbReference type="FunFam" id="3.30.70.150:FF:000001">
    <property type="entry name" value="Ribulose bisphosphate carboxylase large chain"/>
    <property type="match status" value="1"/>
</dbReference>
<dbReference type="Gene3D" id="3.20.20.110">
    <property type="entry name" value="Ribulose bisphosphate carboxylase, large subunit, C-terminal domain"/>
    <property type="match status" value="1"/>
</dbReference>
<dbReference type="Gene3D" id="3.30.70.150">
    <property type="entry name" value="RuBisCO large subunit, N-terminal domain"/>
    <property type="match status" value="1"/>
</dbReference>
<dbReference type="HAMAP" id="MF_01338">
    <property type="entry name" value="RuBisCO_L_type1"/>
    <property type="match status" value="1"/>
</dbReference>
<dbReference type="InterPro" id="IPR033966">
    <property type="entry name" value="RuBisCO"/>
</dbReference>
<dbReference type="InterPro" id="IPR020878">
    <property type="entry name" value="RuBisCo_large_chain_AS"/>
</dbReference>
<dbReference type="InterPro" id="IPR000685">
    <property type="entry name" value="RuBisCO_lsu_C"/>
</dbReference>
<dbReference type="InterPro" id="IPR036376">
    <property type="entry name" value="RuBisCO_lsu_C_sf"/>
</dbReference>
<dbReference type="InterPro" id="IPR017443">
    <property type="entry name" value="RuBisCO_lsu_fd_N"/>
</dbReference>
<dbReference type="InterPro" id="IPR036422">
    <property type="entry name" value="RuBisCO_lsu_N_sf"/>
</dbReference>
<dbReference type="InterPro" id="IPR020888">
    <property type="entry name" value="RuBisCO_lsuI"/>
</dbReference>
<dbReference type="NCBIfam" id="NF003252">
    <property type="entry name" value="PRK04208.1"/>
    <property type="match status" value="1"/>
</dbReference>
<dbReference type="PANTHER" id="PTHR42704">
    <property type="entry name" value="RIBULOSE BISPHOSPHATE CARBOXYLASE"/>
    <property type="match status" value="1"/>
</dbReference>
<dbReference type="PANTHER" id="PTHR42704:SF16">
    <property type="entry name" value="RIBULOSE BISPHOSPHATE CARBOXYLASE LARGE CHAIN"/>
    <property type="match status" value="1"/>
</dbReference>
<dbReference type="Pfam" id="PF00016">
    <property type="entry name" value="RuBisCO_large"/>
    <property type="match status" value="1"/>
</dbReference>
<dbReference type="Pfam" id="PF02788">
    <property type="entry name" value="RuBisCO_large_N"/>
    <property type="match status" value="1"/>
</dbReference>
<dbReference type="SFLD" id="SFLDG01052">
    <property type="entry name" value="RuBisCO"/>
    <property type="match status" value="1"/>
</dbReference>
<dbReference type="SFLD" id="SFLDS00014">
    <property type="entry name" value="RuBisCO"/>
    <property type="match status" value="1"/>
</dbReference>
<dbReference type="SFLD" id="SFLDG00301">
    <property type="entry name" value="RuBisCO-like_proteins"/>
    <property type="match status" value="1"/>
</dbReference>
<dbReference type="SUPFAM" id="SSF51649">
    <property type="entry name" value="RuBisCo, C-terminal domain"/>
    <property type="match status" value="1"/>
</dbReference>
<dbReference type="SUPFAM" id="SSF54966">
    <property type="entry name" value="RuBisCO, large subunit, small (N-terminal) domain"/>
    <property type="match status" value="1"/>
</dbReference>
<dbReference type="PROSITE" id="PS00157">
    <property type="entry name" value="RUBISCO_LARGE"/>
    <property type="match status" value="1"/>
</dbReference>
<keyword id="KW-0007">Acetylation</keyword>
<keyword id="KW-0113">Calvin cycle</keyword>
<keyword id="KW-0120">Carbon dioxide fixation</keyword>
<keyword id="KW-0150">Chloroplast</keyword>
<keyword id="KW-1015">Disulfide bond</keyword>
<keyword id="KW-0456">Lyase</keyword>
<keyword id="KW-0460">Magnesium</keyword>
<keyword id="KW-0479">Metal-binding</keyword>
<keyword id="KW-0488">Methylation</keyword>
<keyword id="KW-0503">Monooxygenase</keyword>
<keyword id="KW-0560">Oxidoreductase</keyword>
<keyword id="KW-0601">Photorespiration</keyword>
<keyword id="KW-0602">Photosynthesis</keyword>
<keyword id="KW-0934">Plastid</keyword>
<protein>
    <recommendedName>
        <fullName evidence="1">Ribulose bisphosphate carboxylase large chain</fullName>
        <shortName evidence="1">RuBisCO large subunit</shortName>
        <ecNumber evidence="1">4.1.1.39</ecNumber>
    </recommendedName>
</protein>
<proteinExistence type="inferred from homology"/>
<geneLocation type="chloroplast"/>
<accession>Q3BAN4</accession>
<evidence type="ECO:0000255" key="1">
    <source>
        <dbReference type="HAMAP-Rule" id="MF_01338"/>
    </source>
</evidence>
<sequence length="480" mass="53262">MSPQTETKASVGFKAGVKDYKLTYYTPDYETKDTDILAAFRVTPQPGVPPEEAGAAVAAESSTGTWTTVWTDGLTSLDRYKGRCYHIEVVVGEENQYIAYVAYPLDLFEEGSVTNMFTSIVGNVFGFKALRALRLEDLRIPPSYSKTFQGPPHGIQVERDKLNKYGRPLLGCTIKPKLGLSAKNYGRAVYECLRGGLDFTKDDENVNSQPFMRWRDRFLFCAEAIYKAQAETGEIKGHYLNATAGTCEEMIKRAVFARELGVPIVMHDYLTGGFTANTSLAHYCRDNGLLLHIHRAMHAVIDRQKNHGMHFRVLAKALRMSGGDHIHAGTVVGKLEGEREMTLGFVDLLRDDYIEKDRSRGIFFTQDWVSMPGVIPVASGGIHVWHMPALTEIFGDDSVLQFGGGTLGHPWGNAPGAVANRVALEACVQARNEGRDLAREGNDIIREASKWSPELAAACEVWKEITFDFDPVDKPDIEAK</sequence>